<organism>
    <name type="scientific">Saccharomyces cerevisiae (strain ATCC 204508 / S288c)</name>
    <name type="common">Baker's yeast</name>
    <dbReference type="NCBI Taxonomy" id="559292"/>
    <lineage>
        <taxon>Eukaryota</taxon>
        <taxon>Fungi</taxon>
        <taxon>Dikarya</taxon>
        <taxon>Ascomycota</taxon>
        <taxon>Saccharomycotina</taxon>
        <taxon>Saccharomycetes</taxon>
        <taxon>Saccharomycetales</taxon>
        <taxon>Saccharomycetaceae</taxon>
        <taxon>Saccharomyces</taxon>
    </lineage>
</organism>
<protein>
    <recommendedName>
        <fullName evidence="4">Large ribosomal subunit protein eL33A</fullName>
    </recommendedName>
    <alternativeName>
        <fullName evidence="5">60S ribosomal protein L33-A</fullName>
    </alternativeName>
    <alternativeName>
        <fullName>L37</fullName>
    </alternativeName>
    <alternativeName>
        <fullName>RP47</fullName>
    </alternativeName>
    <alternativeName>
        <fullName>YL37</fullName>
    </alternativeName>
</protein>
<proteinExistence type="evidence at protein level"/>
<feature type="initiator methionine" description="Removed" evidence="1 2">
    <location>
        <position position="1"/>
    </location>
</feature>
<feature type="chain" id="PRO_0000192807" description="Large ribosomal subunit protein eL33A">
    <location>
        <begin position="2"/>
        <end position="107"/>
    </location>
</feature>
<feature type="modified residue" description="N-acetylalanine; partial" evidence="1">
    <location>
        <position position="2"/>
    </location>
</feature>
<feature type="cross-link" description="Glycyl lysine isopeptide (Lys-Gly) (interchain with G-Cter in ubiquitin)" evidence="9">
    <location>
        <position position="47"/>
    </location>
</feature>
<feature type="sequence conflict" description="In Ref. 5; AA sequence." evidence="6" ref="5">
    <original>N</original>
    <variation>D</variation>
    <location>
        <position position="24"/>
    </location>
</feature>
<feature type="strand" evidence="10">
    <location>
        <begin position="8"/>
        <end position="18"/>
    </location>
</feature>
<feature type="strand" evidence="10">
    <location>
        <begin position="23"/>
        <end position="30"/>
    </location>
</feature>
<feature type="helix" evidence="10">
    <location>
        <begin position="38"/>
        <end position="41"/>
    </location>
</feature>
<feature type="helix" evidence="10">
    <location>
        <begin position="42"/>
        <end position="44"/>
    </location>
</feature>
<feature type="strand" evidence="10">
    <location>
        <begin position="48"/>
        <end position="54"/>
    </location>
</feature>
<feature type="strand" evidence="10">
    <location>
        <begin position="59"/>
        <end position="61"/>
    </location>
</feature>
<feature type="strand" evidence="10">
    <location>
        <begin position="63"/>
        <end position="74"/>
    </location>
</feature>
<feature type="strand" evidence="10">
    <location>
        <begin position="81"/>
        <end position="87"/>
    </location>
</feature>
<feature type="turn" evidence="10">
    <location>
        <begin position="92"/>
        <end position="95"/>
    </location>
</feature>
<feature type="strand" evidence="10">
    <location>
        <begin position="96"/>
        <end position="101"/>
    </location>
</feature>
<sequence>MAESHRLYVKGKHLSYQRSKRVNNPNVSLIKIEGVATPQDAQFYLGKRIAYVYRASKEVRGSKIRVMWGKVTRTHGNSGVVRATFRNNLPAKTFGASVRIFLYPSNI</sequence>
<comment type="function">
    <text evidence="7">Component of the ribosome, a large ribonucleoprotein complex responsible for the synthesis of proteins in the cell. The small ribosomal subunit (SSU) binds messenger RNAs (mRNAs) and translates the encoded message by selecting cognate aminoacyl-transfer RNA (tRNA) molecules. The large subunit (LSU) contains the ribosomal catalytic site termed the peptidyl transferase center (PTC), which catalyzes the formation of peptide bonds, thereby polymerizing the amino acids delivered by tRNAs into a polypeptide chain. The nascent polypeptides leave the ribosome through a tunnel in the LSU and interact with protein factors that function in enzymatic processing, targeting, and the membrane insertion of nascent chains at the exit of the ribosomal tunnel.</text>
</comment>
<comment type="subunit">
    <text evidence="3 8">Component of the large ribosomal subunit (LSU). Mature yeast ribosomes consist of a small (40S) and a large (60S) subunit. The 40S small subunit contains 1 molecule of ribosomal RNA (18S rRNA) and 33 different proteins (encoded by 57 genes). The large 60S subunit contains 3 rRNA molecules (25S, 5.8S and 5S rRNA) and 46 different proteins (encoded by 81 genes) (PubMed:22096102, PubMed:9559554).</text>
</comment>
<comment type="subcellular location">
    <subcellularLocation>
        <location evidence="3">Cytoplasm</location>
    </subcellularLocation>
</comment>
<comment type="PTM">
    <text evidence="1">N-terminally acetylated by acetyltransferase NatA.</text>
</comment>
<comment type="miscellaneous">
    <text evidence="6">There are 2 genes for eL33 in yeast.</text>
</comment>
<comment type="similarity">
    <text evidence="6">Belongs to the eukaryotic ribosomal protein eL33 family.</text>
</comment>
<keyword id="KW-0002">3D-structure</keyword>
<keyword id="KW-0007">Acetylation</keyword>
<keyword id="KW-0963">Cytoplasm</keyword>
<keyword id="KW-0903">Direct protein sequencing</keyword>
<keyword id="KW-1017">Isopeptide bond</keyword>
<keyword id="KW-1185">Reference proteome</keyword>
<keyword id="KW-0687">Ribonucleoprotein</keyword>
<keyword id="KW-0689">Ribosomal protein</keyword>
<keyword id="KW-0832">Ubl conjugation</keyword>
<gene>
    <name evidence="5" type="primary">RPL33A</name>
    <name type="synonym">RPL37A</name>
    <name type="ordered locus">YPL143W</name>
    <name type="ORF">LPI4W</name>
    <name type="ORF">P2625</name>
</gene>
<reference key="1">
    <citation type="journal article" date="1991" name="Gene">
        <title>Screening a yeast promoter library leads to the isolation of the RP29/L32 and SNR17B/RPL37A divergent promoters and the discovery of a gene encoding ribosomal protein L37.</title>
        <authorList>
            <person name="Santangelo G.M."/>
            <person name="Tornow J."/>
            <person name="McLaughlin C.S."/>
            <person name="Moldave K."/>
        </authorList>
    </citation>
    <scope>NUCLEOTIDE SEQUENCE [GENOMIC DNA]</scope>
    <source>
        <strain>ATCC 204626 / S288c / A364A</strain>
    </source>
</reference>
<reference key="2">
    <citation type="journal article" date="1996" name="Yeast">
        <title>The sequence of 55 kb on the left arm of yeast chromosome XVI identifies a small nuclear RNA, a new putative protein kinase and two new putative regulators.</title>
        <authorList>
            <person name="Purnelle B."/>
            <person name="Coster F."/>
            <person name="Goffeau A."/>
        </authorList>
    </citation>
    <scope>NUCLEOTIDE SEQUENCE [GENOMIC DNA]</scope>
    <source>
        <strain>ATCC 204511 / S288c / AB972</strain>
    </source>
</reference>
<reference key="3">
    <citation type="journal article" date="1997" name="Nature">
        <title>The nucleotide sequence of Saccharomyces cerevisiae chromosome XVI.</title>
        <authorList>
            <person name="Bussey H."/>
            <person name="Storms R.K."/>
            <person name="Ahmed A."/>
            <person name="Albermann K."/>
            <person name="Allen E."/>
            <person name="Ansorge W."/>
            <person name="Araujo R."/>
            <person name="Aparicio A."/>
            <person name="Barrell B.G."/>
            <person name="Badcock K."/>
            <person name="Benes V."/>
            <person name="Botstein D."/>
            <person name="Bowman S."/>
            <person name="Brueckner M."/>
            <person name="Carpenter J."/>
            <person name="Cherry J.M."/>
            <person name="Chung E."/>
            <person name="Churcher C.M."/>
            <person name="Coster F."/>
            <person name="Davis K."/>
            <person name="Davis R.W."/>
            <person name="Dietrich F.S."/>
            <person name="Delius H."/>
            <person name="DiPaolo T."/>
            <person name="Dubois E."/>
            <person name="Duesterhoeft A."/>
            <person name="Duncan M."/>
            <person name="Floeth M."/>
            <person name="Fortin N."/>
            <person name="Friesen J.D."/>
            <person name="Fritz C."/>
            <person name="Goffeau A."/>
            <person name="Hall J."/>
            <person name="Hebling U."/>
            <person name="Heumann K."/>
            <person name="Hilbert H."/>
            <person name="Hillier L.W."/>
            <person name="Hunicke-Smith S."/>
            <person name="Hyman R.W."/>
            <person name="Johnston M."/>
            <person name="Kalman S."/>
            <person name="Kleine K."/>
            <person name="Komp C."/>
            <person name="Kurdi O."/>
            <person name="Lashkari D."/>
            <person name="Lew H."/>
            <person name="Lin A."/>
            <person name="Lin D."/>
            <person name="Louis E.J."/>
            <person name="Marathe R."/>
            <person name="Messenguy F."/>
            <person name="Mewes H.-W."/>
            <person name="Mirtipati S."/>
            <person name="Moestl D."/>
            <person name="Mueller-Auer S."/>
            <person name="Namath A."/>
            <person name="Nentwich U."/>
            <person name="Oefner P."/>
            <person name="Pearson D."/>
            <person name="Petel F.X."/>
            <person name="Pohl T.M."/>
            <person name="Purnelle B."/>
            <person name="Rajandream M.A."/>
            <person name="Rechmann S."/>
            <person name="Rieger M."/>
            <person name="Riles L."/>
            <person name="Roberts D."/>
            <person name="Schaefer M."/>
            <person name="Scharfe M."/>
            <person name="Scherens B."/>
            <person name="Schramm S."/>
            <person name="Schroeder M."/>
            <person name="Sdicu A.-M."/>
            <person name="Tettelin H."/>
            <person name="Urrestarazu L.A."/>
            <person name="Ushinsky S."/>
            <person name="Vierendeels F."/>
            <person name="Vissers S."/>
            <person name="Voss H."/>
            <person name="Walsh S.V."/>
            <person name="Wambutt R."/>
            <person name="Wang Y."/>
            <person name="Wedler E."/>
            <person name="Wedler H."/>
            <person name="Winnett E."/>
            <person name="Zhong W.-W."/>
            <person name="Zollner A."/>
            <person name="Vo D.H."/>
            <person name="Hani J."/>
        </authorList>
    </citation>
    <scope>NUCLEOTIDE SEQUENCE [LARGE SCALE GENOMIC DNA]</scope>
    <source>
        <strain>ATCC 204508 / S288c</strain>
    </source>
</reference>
<reference key="4">
    <citation type="journal article" date="2014" name="G3 (Bethesda)">
        <title>The reference genome sequence of Saccharomyces cerevisiae: Then and now.</title>
        <authorList>
            <person name="Engel S.R."/>
            <person name="Dietrich F.S."/>
            <person name="Fisk D.G."/>
            <person name="Binkley G."/>
            <person name="Balakrishnan R."/>
            <person name="Costanzo M.C."/>
            <person name="Dwight S.S."/>
            <person name="Hitz B.C."/>
            <person name="Karra K."/>
            <person name="Nash R.S."/>
            <person name="Weng S."/>
            <person name="Wong E.D."/>
            <person name="Lloyd P."/>
            <person name="Skrzypek M.S."/>
            <person name="Miyasato S.R."/>
            <person name="Simison M."/>
            <person name="Cherry J.M."/>
        </authorList>
    </citation>
    <scope>GENOME REANNOTATION</scope>
    <source>
        <strain>ATCC 204508 / S288c</strain>
    </source>
</reference>
<reference key="5">
    <citation type="journal article" date="1984" name="Mol. Gen. Genet.">
        <title>Yeast ribosomal proteins. VIII. Isolation of two proteins and sequence characterization of twenty-four proteins from cytoplasmic ribosomes.</title>
        <authorList>
            <person name="Otaka E."/>
            <person name="Higo K."/>
            <person name="Itoh T."/>
        </authorList>
    </citation>
    <scope>PARTIAL PROTEIN SEQUENCE OF 2-26</scope>
    <scope>CLEAVAGE OF INITIATOR METHIONINE</scope>
</reference>
<reference key="6">
    <citation type="journal article" date="1998" name="Yeast">
        <title>The list of cytoplasmic ribosomal proteins of Saccharomyces cerevisiae.</title>
        <authorList>
            <person name="Planta R.J."/>
            <person name="Mager W.H."/>
        </authorList>
    </citation>
    <scope>NOMENCLATURE</scope>
    <scope>SUBUNIT</scope>
</reference>
<reference key="7">
    <citation type="journal article" date="1999" name="J. Biol. Chem.">
        <title>The action of N-terminal acetyltransferases on yeast ribosomal proteins.</title>
        <authorList>
            <person name="Arnold R.J."/>
            <person name="Polevoda B."/>
            <person name="Reilly J.P."/>
            <person name="Sherman F."/>
        </authorList>
    </citation>
    <scope>CLEAVAGE OF INITIATOR METHIONINE</scope>
    <scope>ACETYLATION AT ALA-2 BY NATA</scope>
</reference>
<reference key="8">
    <citation type="journal article" date="2012" name="Proteomics">
        <title>Sites of ubiquitin attachment in Saccharomyces cerevisiae.</title>
        <authorList>
            <person name="Starita L.M."/>
            <person name="Lo R.S."/>
            <person name="Eng J.K."/>
            <person name="von Haller P.D."/>
            <person name="Fields S."/>
        </authorList>
    </citation>
    <scope>UBIQUITINATION [LARGE SCALE ANALYSIS] AT LYS-47</scope>
    <scope>IDENTIFICATION BY MASS SPECTROMETRY [LARGE SCALE ANALYSIS]</scope>
</reference>
<reference key="9">
    <citation type="journal article" date="2014" name="Curr. Opin. Struct. Biol.">
        <title>A new system for naming ribosomal proteins.</title>
        <authorList>
            <person name="Ban N."/>
            <person name="Beckmann R."/>
            <person name="Cate J.H.D."/>
            <person name="Dinman J.D."/>
            <person name="Dragon F."/>
            <person name="Ellis S.R."/>
            <person name="Lafontaine D.L.J."/>
            <person name="Lindahl L."/>
            <person name="Liljas A."/>
            <person name="Lipton J.M."/>
            <person name="McAlear M.A."/>
            <person name="Moore P.B."/>
            <person name="Noller H.F."/>
            <person name="Ortega J."/>
            <person name="Panse V.G."/>
            <person name="Ramakrishnan V."/>
            <person name="Spahn C.M.T."/>
            <person name="Steitz T.A."/>
            <person name="Tchorzewski M."/>
            <person name="Tollervey D."/>
            <person name="Warren A.J."/>
            <person name="Williamson J.R."/>
            <person name="Wilson D."/>
            <person name="Yonath A."/>
            <person name="Yusupov M."/>
        </authorList>
    </citation>
    <scope>NOMENCLATURE</scope>
</reference>
<reference key="10">
    <citation type="journal article" date="2010" name="Science">
        <title>Crystal structure of the eukaryotic ribosome.</title>
        <authorList>
            <person name="Ben-Shem A."/>
            <person name="Jenner L."/>
            <person name="Yusupova G."/>
            <person name="Yusupov M."/>
        </authorList>
    </citation>
    <scope>X-RAY CRYSTALLOGRAPHY (4.0 ANGSTROMS) OF 80S RIBOSOME</scope>
</reference>
<reference key="11">
    <citation type="journal article" date="2011" name="Science">
        <title>The structure of the eukaryotic ribosome at 3.0 A resolution.</title>
        <authorList>
            <person name="Ben-Shem A."/>
            <person name="Garreau de Loubresse N."/>
            <person name="Melnikov S."/>
            <person name="Jenner L."/>
            <person name="Yusupova G."/>
            <person name="Yusupov M."/>
        </authorList>
    </citation>
    <scope>X-RAY CRYSTALLOGRAPHY (3.0 ANGSTROMS) OF 80S RIBOSOME</scope>
    <scope>SUBUNIT</scope>
    <scope>SUBCELLULAR LOCATION</scope>
</reference>
<dbReference type="EMBL" id="X57969">
    <property type="protein sequence ID" value="CAA41035.1"/>
    <property type="molecule type" value="Genomic_DNA"/>
</dbReference>
<dbReference type="EMBL" id="U43703">
    <property type="protein sequence ID" value="AAB68218.1"/>
    <property type="molecule type" value="Genomic_DNA"/>
</dbReference>
<dbReference type="EMBL" id="Z73499">
    <property type="protein sequence ID" value="CAA97847.1"/>
    <property type="molecule type" value="Genomic_DNA"/>
</dbReference>
<dbReference type="EMBL" id="BK006949">
    <property type="protein sequence ID" value="DAA11292.1"/>
    <property type="molecule type" value="Genomic_DNA"/>
</dbReference>
<dbReference type="PIR" id="S18431">
    <property type="entry name" value="S18431"/>
</dbReference>
<dbReference type="RefSeq" id="NP_015182.1">
    <property type="nucleotide sequence ID" value="NM_001183957.1"/>
</dbReference>
<dbReference type="PDB" id="3J6X">
    <property type="method" value="EM"/>
    <property type="resolution" value="6.10 A"/>
    <property type="chains" value="73=1-107"/>
</dbReference>
<dbReference type="PDB" id="3J6Y">
    <property type="method" value="EM"/>
    <property type="resolution" value="6.10 A"/>
    <property type="chains" value="73=1-107"/>
</dbReference>
<dbReference type="PDB" id="3J77">
    <property type="method" value="EM"/>
    <property type="resolution" value="6.20 A"/>
    <property type="chains" value="83=1-107"/>
</dbReference>
<dbReference type="PDB" id="3J78">
    <property type="method" value="EM"/>
    <property type="resolution" value="6.30 A"/>
    <property type="chains" value="83=1-107"/>
</dbReference>
<dbReference type="PDB" id="3JCT">
    <property type="method" value="EM"/>
    <property type="resolution" value="3.08 A"/>
    <property type="chains" value="f=1-107"/>
</dbReference>
<dbReference type="PDB" id="4U3M">
    <property type="method" value="X-ray"/>
    <property type="resolution" value="3.00 A"/>
    <property type="chains" value="O3/o3=2-107"/>
</dbReference>
<dbReference type="PDB" id="4U3N">
    <property type="method" value="X-ray"/>
    <property type="resolution" value="3.20 A"/>
    <property type="chains" value="O3/o3=2-107"/>
</dbReference>
<dbReference type="PDB" id="4U3U">
    <property type="method" value="X-ray"/>
    <property type="resolution" value="2.90 A"/>
    <property type="chains" value="O3/o3=2-107"/>
</dbReference>
<dbReference type="PDB" id="4U4N">
    <property type="method" value="X-ray"/>
    <property type="resolution" value="3.10 A"/>
    <property type="chains" value="O3/o3=2-107"/>
</dbReference>
<dbReference type="PDB" id="4U4O">
    <property type="method" value="X-ray"/>
    <property type="resolution" value="3.60 A"/>
    <property type="chains" value="O3/o3=2-107"/>
</dbReference>
<dbReference type="PDB" id="4U4Q">
    <property type="method" value="X-ray"/>
    <property type="resolution" value="3.00 A"/>
    <property type="chains" value="O3/o3=2-107"/>
</dbReference>
<dbReference type="PDB" id="4U4R">
    <property type="method" value="X-ray"/>
    <property type="resolution" value="2.80 A"/>
    <property type="chains" value="O3/o3=2-107"/>
</dbReference>
<dbReference type="PDB" id="4U4U">
    <property type="method" value="X-ray"/>
    <property type="resolution" value="3.00 A"/>
    <property type="chains" value="O3/o3=2-107"/>
</dbReference>
<dbReference type="PDB" id="4U4Y">
    <property type="method" value="X-ray"/>
    <property type="resolution" value="3.20 A"/>
    <property type="chains" value="O3/o3=2-107"/>
</dbReference>
<dbReference type="PDB" id="4U4Z">
    <property type="method" value="X-ray"/>
    <property type="resolution" value="3.10 A"/>
    <property type="chains" value="O3/o3=2-107"/>
</dbReference>
<dbReference type="PDB" id="4U50">
    <property type="method" value="X-ray"/>
    <property type="resolution" value="3.20 A"/>
    <property type="chains" value="O3/o3=2-107"/>
</dbReference>
<dbReference type="PDB" id="4U51">
    <property type="method" value="X-ray"/>
    <property type="resolution" value="3.20 A"/>
    <property type="chains" value="O3/o3=2-107"/>
</dbReference>
<dbReference type="PDB" id="4U52">
    <property type="method" value="X-ray"/>
    <property type="resolution" value="3.00 A"/>
    <property type="chains" value="O3/o3=2-107"/>
</dbReference>
<dbReference type="PDB" id="4U53">
    <property type="method" value="X-ray"/>
    <property type="resolution" value="3.30 A"/>
    <property type="chains" value="O3/o3=2-107"/>
</dbReference>
<dbReference type="PDB" id="4U55">
    <property type="method" value="X-ray"/>
    <property type="resolution" value="3.20 A"/>
    <property type="chains" value="O3/o3=2-107"/>
</dbReference>
<dbReference type="PDB" id="4U56">
    <property type="method" value="X-ray"/>
    <property type="resolution" value="3.45 A"/>
    <property type="chains" value="O3/o3=2-107"/>
</dbReference>
<dbReference type="PDB" id="4U6F">
    <property type="method" value="X-ray"/>
    <property type="resolution" value="3.10 A"/>
    <property type="chains" value="O3/o3=2-107"/>
</dbReference>
<dbReference type="PDB" id="4V6I">
    <property type="method" value="EM"/>
    <property type="resolution" value="8.80 A"/>
    <property type="chains" value="Bj=1-107"/>
</dbReference>
<dbReference type="PDB" id="4V7F">
    <property type="method" value="EM"/>
    <property type="resolution" value="8.70 A"/>
    <property type="chains" value="e=1-107"/>
</dbReference>
<dbReference type="PDB" id="4V88">
    <property type="method" value="X-ray"/>
    <property type="resolution" value="3.00 A"/>
    <property type="chains" value="Bf/Df=1-107"/>
</dbReference>
<dbReference type="PDB" id="4V8T">
    <property type="method" value="EM"/>
    <property type="resolution" value="8.10 A"/>
    <property type="chains" value="f=1-107"/>
</dbReference>
<dbReference type="PDB" id="4V8Y">
    <property type="method" value="EM"/>
    <property type="resolution" value="4.30 A"/>
    <property type="chains" value="Bf=2-107"/>
</dbReference>
<dbReference type="PDB" id="4V8Z">
    <property type="method" value="EM"/>
    <property type="resolution" value="6.60 A"/>
    <property type="chains" value="Bf=2-107"/>
</dbReference>
<dbReference type="PDB" id="4V91">
    <property type="method" value="EM"/>
    <property type="resolution" value="3.70 A"/>
    <property type="chains" value="f=1-107"/>
</dbReference>
<dbReference type="PDB" id="5APN">
    <property type="method" value="EM"/>
    <property type="resolution" value="3.91 A"/>
    <property type="chains" value="f=1-107"/>
</dbReference>
<dbReference type="PDB" id="5APO">
    <property type="method" value="EM"/>
    <property type="resolution" value="3.41 A"/>
    <property type="chains" value="f=1-107"/>
</dbReference>
<dbReference type="PDB" id="5DAT">
    <property type="method" value="X-ray"/>
    <property type="resolution" value="3.15 A"/>
    <property type="chains" value="O3/o3=2-107"/>
</dbReference>
<dbReference type="PDB" id="5DC3">
    <property type="method" value="X-ray"/>
    <property type="resolution" value="3.25 A"/>
    <property type="chains" value="O3/o3=2-107"/>
</dbReference>
<dbReference type="PDB" id="5DGE">
    <property type="method" value="X-ray"/>
    <property type="resolution" value="3.45 A"/>
    <property type="chains" value="O3/o3=2-107"/>
</dbReference>
<dbReference type="PDB" id="5DGF">
    <property type="method" value="X-ray"/>
    <property type="resolution" value="3.30 A"/>
    <property type="chains" value="O3/o3=2-107"/>
</dbReference>
<dbReference type="PDB" id="5DGV">
    <property type="method" value="X-ray"/>
    <property type="resolution" value="3.10 A"/>
    <property type="chains" value="O3/o3=2-107"/>
</dbReference>
<dbReference type="PDB" id="5FCI">
    <property type="method" value="X-ray"/>
    <property type="resolution" value="3.40 A"/>
    <property type="chains" value="O3/o3=2-107"/>
</dbReference>
<dbReference type="PDB" id="5FCJ">
    <property type="method" value="X-ray"/>
    <property type="resolution" value="3.10 A"/>
    <property type="chains" value="O3/o3=2-107"/>
</dbReference>
<dbReference type="PDB" id="5GAK">
    <property type="method" value="EM"/>
    <property type="resolution" value="3.88 A"/>
    <property type="chains" value="h=1-107"/>
</dbReference>
<dbReference type="PDB" id="5H4P">
    <property type="method" value="EM"/>
    <property type="resolution" value="3.07 A"/>
    <property type="chains" value="f=1-107"/>
</dbReference>
<dbReference type="PDB" id="5I4L">
    <property type="method" value="X-ray"/>
    <property type="resolution" value="3.10 A"/>
    <property type="chains" value="O3/o3=2-107"/>
</dbReference>
<dbReference type="PDB" id="5JCS">
    <property type="method" value="EM"/>
    <property type="resolution" value="9.50 A"/>
    <property type="chains" value="f=1-107"/>
</dbReference>
<dbReference type="PDB" id="5JUO">
    <property type="method" value="EM"/>
    <property type="resolution" value="4.00 A"/>
    <property type="chains" value="KA=1-107"/>
</dbReference>
<dbReference type="PDB" id="5JUP">
    <property type="method" value="EM"/>
    <property type="resolution" value="3.50 A"/>
    <property type="chains" value="KA=1-107"/>
</dbReference>
<dbReference type="PDB" id="5JUS">
    <property type="method" value="EM"/>
    <property type="resolution" value="4.20 A"/>
    <property type="chains" value="KA=1-107"/>
</dbReference>
<dbReference type="PDB" id="5JUT">
    <property type="method" value="EM"/>
    <property type="resolution" value="4.00 A"/>
    <property type="chains" value="KA=1-107"/>
</dbReference>
<dbReference type="PDB" id="5JUU">
    <property type="method" value="EM"/>
    <property type="resolution" value="4.00 A"/>
    <property type="chains" value="KA=1-107"/>
</dbReference>
<dbReference type="PDB" id="5LYB">
    <property type="method" value="X-ray"/>
    <property type="resolution" value="3.25 A"/>
    <property type="chains" value="O3/o3=2-107"/>
</dbReference>
<dbReference type="PDB" id="5M1J">
    <property type="method" value="EM"/>
    <property type="resolution" value="3.30 A"/>
    <property type="chains" value="f5=2-107"/>
</dbReference>
<dbReference type="PDB" id="5MC6">
    <property type="method" value="EM"/>
    <property type="resolution" value="3.80 A"/>
    <property type="chains" value="BK=1-107"/>
</dbReference>
<dbReference type="PDB" id="5MEI">
    <property type="method" value="X-ray"/>
    <property type="resolution" value="3.50 A"/>
    <property type="chains" value="AG/DH=2-107"/>
</dbReference>
<dbReference type="PDB" id="5NDG">
    <property type="method" value="X-ray"/>
    <property type="resolution" value="3.70 A"/>
    <property type="chains" value="O3/o3=2-107"/>
</dbReference>
<dbReference type="PDB" id="5NDV">
    <property type="method" value="X-ray"/>
    <property type="resolution" value="3.30 A"/>
    <property type="chains" value="O3/o3=2-107"/>
</dbReference>
<dbReference type="PDB" id="5NDW">
    <property type="method" value="X-ray"/>
    <property type="resolution" value="3.70 A"/>
    <property type="chains" value="O3/o3=2-107"/>
</dbReference>
<dbReference type="PDB" id="5OBM">
    <property type="method" value="X-ray"/>
    <property type="resolution" value="3.40 A"/>
    <property type="chains" value="O3/o3=2-107"/>
</dbReference>
<dbReference type="PDB" id="5ON6">
    <property type="method" value="X-ray"/>
    <property type="resolution" value="3.10 A"/>
    <property type="chains" value="AG/DH=2-107"/>
</dbReference>
<dbReference type="PDB" id="5T62">
    <property type="method" value="EM"/>
    <property type="resolution" value="3.30 A"/>
    <property type="chains" value="s=1-107"/>
</dbReference>
<dbReference type="PDB" id="5T6R">
    <property type="method" value="EM"/>
    <property type="resolution" value="4.50 A"/>
    <property type="chains" value="s=1-107"/>
</dbReference>
<dbReference type="PDB" id="5TBW">
    <property type="method" value="X-ray"/>
    <property type="resolution" value="3.00 A"/>
    <property type="chains" value="AG/DH=2-107"/>
</dbReference>
<dbReference type="PDB" id="5TGA">
    <property type="method" value="X-ray"/>
    <property type="resolution" value="3.30 A"/>
    <property type="chains" value="O3/o3=2-107"/>
</dbReference>
<dbReference type="PDB" id="5TGM">
    <property type="method" value="X-ray"/>
    <property type="resolution" value="3.50 A"/>
    <property type="chains" value="O3/o3=2-107"/>
</dbReference>
<dbReference type="PDB" id="5Z3G">
    <property type="method" value="EM"/>
    <property type="resolution" value="3.65 A"/>
    <property type="chains" value="j=1-107"/>
</dbReference>
<dbReference type="PDB" id="6C0F">
    <property type="method" value="EM"/>
    <property type="resolution" value="3.70 A"/>
    <property type="chains" value="f=1-107"/>
</dbReference>
<dbReference type="PDB" id="6CB1">
    <property type="method" value="EM"/>
    <property type="resolution" value="4.60 A"/>
    <property type="chains" value="f=1-107"/>
</dbReference>
<dbReference type="PDB" id="6ELZ">
    <property type="method" value="EM"/>
    <property type="resolution" value="3.30 A"/>
    <property type="chains" value="f=1-107"/>
</dbReference>
<dbReference type="PDB" id="6EM1">
    <property type="method" value="EM"/>
    <property type="resolution" value="3.60 A"/>
    <property type="chains" value="f=1-107"/>
</dbReference>
<dbReference type="PDB" id="6EM3">
    <property type="method" value="EM"/>
    <property type="resolution" value="3.20 A"/>
    <property type="chains" value="f=1-107"/>
</dbReference>
<dbReference type="PDB" id="6EM4">
    <property type="method" value="EM"/>
    <property type="resolution" value="4.10 A"/>
    <property type="chains" value="f=1-107"/>
</dbReference>
<dbReference type="PDB" id="6EM5">
    <property type="method" value="EM"/>
    <property type="resolution" value="4.30 A"/>
    <property type="chains" value="f=1-107"/>
</dbReference>
<dbReference type="PDB" id="6FT6">
    <property type="method" value="EM"/>
    <property type="resolution" value="3.90 A"/>
    <property type="chains" value="f=1-107"/>
</dbReference>
<dbReference type="PDB" id="6GQ1">
    <property type="method" value="EM"/>
    <property type="resolution" value="4.40 A"/>
    <property type="chains" value="f=2-107"/>
</dbReference>
<dbReference type="PDB" id="6GQB">
    <property type="method" value="EM"/>
    <property type="resolution" value="3.90 A"/>
    <property type="chains" value="f=2-107"/>
</dbReference>
<dbReference type="PDB" id="6GQV">
    <property type="method" value="EM"/>
    <property type="resolution" value="4.00 A"/>
    <property type="chains" value="f=2-107"/>
</dbReference>
<dbReference type="PDB" id="6HD7">
    <property type="method" value="EM"/>
    <property type="resolution" value="3.40 A"/>
    <property type="chains" value="h=1-107"/>
</dbReference>
<dbReference type="PDB" id="6HHQ">
    <property type="method" value="X-ray"/>
    <property type="resolution" value="3.10 A"/>
    <property type="chains" value="AG/DH=1-107"/>
</dbReference>
<dbReference type="PDB" id="6I7O">
    <property type="method" value="EM"/>
    <property type="resolution" value="5.30 A"/>
    <property type="chains" value="BK/YK=2-107"/>
</dbReference>
<dbReference type="PDB" id="6M62">
    <property type="method" value="EM"/>
    <property type="resolution" value="3.20 A"/>
    <property type="chains" value="f=1-107"/>
</dbReference>
<dbReference type="PDB" id="6N8J">
    <property type="method" value="EM"/>
    <property type="resolution" value="3.50 A"/>
    <property type="chains" value="f=1-107"/>
</dbReference>
<dbReference type="PDB" id="6N8K">
    <property type="method" value="EM"/>
    <property type="resolution" value="3.60 A"/>
    <property type="chains" value="f=1-107"/>
</dbReference>
<dbReference type="PDB" id="6N8L">
    <property type="method" value="EM"/>
    <property type="resolution" value="3.60 A"/>
    <property type="chains" value="f=1-107"/>
</dbReference>
<dbReference type="PDB" id="6N8M">
    <property type="method" value="EM"/>
    <property type="resolution" value="3.50 A"/>
    <property type="chains" value="s=1-107"/>
</dbReference>
<dbReference type="PDB" id="6N8N">
    <property type="method" value="EM"/>
    <property type="resolution" value="3.80 A"/>
    <property type="chains" value="s=1-107"/>
</dbReference>
<dbReference type="PDB" id="6N8O">
    <property type="method" value="EM"/>
    <property type="resolution" value="3.50 A"/>
    <property type="chains" value="s=1-107"/>
</dbReference>
<dbReference type="PDB" id="6OIG">
    <property type="method" value="EM"/>
    <property type="resolution" value="3.80 A"/>
    <property type="chains" value="f=2-107"/>
</dbReference>
<dbReference type="PDB" id="6Q8Y">
    <property type="method" value="EM"/>
    <property type="resolution" value="3.10 A"/>
    <property type="chains" value="BK=2-107"/>
</dbReference>
<dbReference type="PDB" id="6QIK">
    <property type="method" value="EM"/>
    <property type="resolution" value="3.10 A"/>
    <property type="chains" value="f=1-107"/>
</dbReference>
<dbReference type="PDB" id="6QT0">
    <property type="method" value="EM"/>
    <property type="resolution" value="3.40 A"/>
    <property type="chains" value="f=1-107"/>
</dbReference>
<dbReference type="PDB" id="6QTZ">
    <property type="method" value="EM"/>
    <property type="resolution" value="3.50 A"/>
    <property type="chains" value="f=1-107"/>
</dbReference>
<dbReference type="PDB" id="6R84">
    <property type="method" value="EM"/>
    <property type="resolution" value="3.60 A"/>
    <property type="chains" value="h=2-107"/>
</dbReference>
<dbReference type="PDB" id="6R86">
    <property type="method" value="EM"/>
    <property type="resolution" value="3.40 A"/>
    <property type="chains" value="h=2-107"/>
</dbReference>
<dbReference type="PDB" id="6R87">
    <property type="method" value="EM"/>
    <property type="resolution" value="3.40 A"/>
    <property type="chains" value="h=2-107"/>
</dbReference>
<dbReference type="PDB" id="6RI5">
    <property type="method" value="EM"/>
    <property type="resolution" value="3.30 A"/>
    <property type="chains" value="f=1-107"/>
</dbReference>
<dbReference type="PDB" id="6RZZ">
    <property type="method" value="EM"/>
    <property type="resolution" value="3.20 A"/>
    <property type="chains" value="f=1-107"/>
</dbReference>
<dbReference type="PDB" id="6S05">
    <property type="method" value="EM"/>
    <property type="resolution" value="3.90 A"/>
    <property type="chains" value="f=1-107"/>
</dbReference>
<dbReference type="PDB" id="6S47">
    <property type="method" value="EM"/>
    <property type="resolution" value="3.28 A"/>
    <property type="chains" value="Ah=2-107"/>
</dbReference>
<dbReference type="PDB" id="6SNT">
    <property type="method" value="EM"/>
    <property type="resolution" value="2.80 A"/>
    <property type="chains" value="ak=1-107"/>
</dbReference>
<dbReference type="PDB" id="6SV4">
    <property type="method" value="EM"/>
    <property type="resolution" value="3.30 A"/>
    <property type="chains" value="BK/YK/ZK=1-107"/>
</dbReference>
<dbReference type="PDB" id="6T4Q">
    <property type="method" value="EM"/>
    <property type="resolution" value="2.60 A"/>
    <property type="chains" value="Lf=2-107"/>
</dbReference>
<dbReference type="PDB" id="6T7I">
    <property type="method" value="EM"/>
    <property type="resolution" value="3.20 A"/>
    <property type="chains" value="Lf=1-107"/>
</dbReference>
<dbReference type="PDB" id="6T7T">
    <property type="method" value="EM"/>
    <property type="resolution" value="3.10 A"/>
    <property type="chains" value="Lf=1-107"/>
</dbReference>
<dbReference type="PDB" id="6T83">
    <property type="method" value="EM"/>
    <property type="resolution" value="4.00 A"/>
    <property type="chains" value="Q/fy=1-107"/>
</dbReference>
<dbReference type="PDB" id="6TB3">
    <property type="method" value="EM"/>
    <property type="resolution" value="2.80 A"/>
    <property type="chains" value="BK=2-107"/>
</dbReference>
<dbReference type="PDB" id="6TNU">
    <property type="method" value="EM"/>
    <property type="resolution" value="3.10 A"/>
    <property type="chains" value="BK=2-107"/>
</dbReference>
<dbReference type="PDB" id="6WOO">
    <property type="method" value="EM"/>
    <property type="resolution" value="2.90 A"/>
    <property type="chains" value="f=2-106"/>
</dbReference>
<dbReference type="PDB" id="6XIQ">
    <property type="method" value="EM"/>
    <property type="resolution" value="4.20 A"/>
    <property type="chains" value="f=1-107"/>
</dbReference>
<dbReference type="PDB" id="6XIR">
    <property type="method" value="EM"/>
    <property type="resolution" value="3.20 A"/>
    <property type="chains" value="f=1-107"/>
</dbReference>
<dbReference type="PDB" id="6YLG">
    <property type="method" value="EM"/>
    <property type="resolution" value="3.00 A"/>
    <property type="chains" value="f=1-107"/>
</dbReference>
<dbReference type="PDB" id="6YLH">
    <property type="method" value="EM"/>
    <property type="resolution" value="3.10 A"/>
    <property type="chains" value="f=1-107"/>
</dbReference>
<dbReference type="PDB" id="6YLX">
    <property type="method" value="EM"/>
    <property type="resolution" value="3.90 A"/>
    <property type="chains" value="f=1-107"/>
</dbReference>
<dbReference type="PDB" id="6YLY">
    <property type="method" value="EM"/>
    <property type="resolution" value="3.80 A"/>
    <property type="chains" value="f=1-107"/>
</dbReference>
<dbReference type="PDB" id="6Z6J">
    <property type="method" value="EM"/>
    <property type="resolution" value="3.40 A"/>
    <property type="chains" value="Lf=1-107"/>
</dbReference>
<dbReference type="PDB" id="6Z6K">
    <property type="method" value="EM"/>
    <property type="resolution" value="3.40 A"/>
    <property type="chains" value="Lf=1-107"/>
</dbReference>
<dbReference type="PDB" id="7AZY">
    <property type="method" value="EM"/>
    <property type="resolution" value="2.88 A"/>
    <property type="chains" value="v=1-107"/>
</dbReference>
<dbReference type="PDB" id="7B7D">
    <property type="method" value="EM"/>
    <property type="resolution" value="3.30 A"/>
    <property type="chains" value="Lb=2-107"/>
</dbReference>
<dbReference type="PDB" id="7BT6">
    <property type="method" value="EM"/>
    <property type="resolution" value="3.12 A"/>
    <property type="chains" value="f=1-107"/>
</dbReference>
<dbReference type="PDB" id="7BTB">
    <property type="method" value="EM"/>
    <property type="resolution" value="3.22 A"/>
    <property type="chains" value="f=1-107"/>
</dbReference>
<dbReference type="PDB" id="7MPI">
    <property type="method" value="EM"/>
    <property type="resolution" value="3.05 A"/>
    <property type="chains" value="Af=2-107"/>
</dbReference>
<dbReference type="PDB" id="7MPJ">
    <property type="method" value="EM"/>
    <property type="resolution" value="2.70 A"/>
    <property type="chains" value="Af=2-107"/>
</dbReference>
<dbReference type="PDB" id="7N8B">
    <property type="method" value="EM"/>
    <property type="resolution" value="3.05 A"/>
    <property type="chains" value="Af=2-107"/>
</dbReference>
<dbReference type="PDB" id="7NAC">
    <property type="method" value="EM"/>
    <property type="resolution" value="3.04 A"/>
    <property type="chains" value="f=1-107"/>
</dbReference>
<dbReference type="PDB" id="7NRC">
    <property type="method" value="EM"/>
    <property type="resolution" value="3.90 A"/>
    <property type="chains" value="Lh=2-107"/>
</dbReference>
<dbReference type="PDB" id="7NRD">
    <property type="method" value="EM"/>
    <property type="resolution" value="4.36 A"/>
    <property type="chains" value="Lh=2-107"/>
</dbReference>
<dbReference type="PDB" id="7OF1">
    <property type="method" value="EM"/>
    <property type="resolution" value="3.10 A"/>
    <property type="chains" value="f=1-107"/>
</dbReference>
<dbReference type="PDB" id="7OH3">
    <property type="method" value="EM"/>
    <property type="resolution" value="3.40 A"/>
    <property type="chains" value="f=1-107"/>
</dbReference>
<dbReference type="PDB" id="7OHP">
    <property type="method" value="EM"/>
    <property type="resolution" value="3.90 A"/>
    <property type="chains" value="f=1-107"/>
</dbReference>
<dbReference type="PDB" id="7OHQ">
    <property type="method" value="EM"/>
    <property type="resolution" value="3.10 A"/>
    <property type="chains" value="f=1-107"/>
</dbReference>
<dbReference type="PDB" id="7OHR">
    <property type="method" value="EM"/>
    <property type="resolution" value="4.72 A"/>
    <property type="chains" value="f=1-107"/>
</dbReference>
<dbReference type="PDB" id="7OHS">
    <property type="method" value="EM"/>
    <property type="resolution" value="4.38 A"/>
    <property type="chains" value="f=1-107"/>
</dbReference>
<dbReference type="PDB" id="7OHT">
    <property type="method" value="EM"/>
    <property type="resolution" value="4.70 A"/>
    <property type="chains" value="f=1-107"/>
</dbReference>
<dbReference type="PDB" id="7OHU">
    <property type="method" value="EM"/>
    <property type="resolution" value="3.70 A"/>
    <property type="chains" value="f=1-107"/>
</dbReference>
<dbReference type="PDB" id="7OHV">
    <property type="method" value="EM"/>
    <property type="resolution" value="3.90 A"/>
    <property type="chains" value="f=1-107"/>
</dbReference>
<dbReference type="PDB" id="7OHW">
    <property type="method" value="EM"/>
    <property type="resolution" value="3.50 A"/>
    <property type="chains" value="f=1-107"/>
</dbReference>
<dbReference type="PDB" id="7OHX">
    <property type="method" value="EM"/>
    <property type="resolution" value="3.30 A"/>
    <property type="chains" value="f=1-107"/>
</dbReference>
<dbReference type="PDB" id="7OHY">
    <property type="method" value="EM"/>
    <property type="resolution" value="3.90 A"/>
    <property type="chains" value="f=1-107"/>
</dbReference>
<dbReference type="PDB" id="7R7A">
    <property type="method" value="EM"/>
    <property type="resolution" value="3.04 A"/>
    <property type="chains" value="f=1-107"/>
</dbReference>
<dbReference type="PDB" id="7TOO">
    <property type="method" value="EM"/>
    <property type="resolution" value="2.70 A"/>
    <property type="chains" value="AL33=1-107"/>
</dbReference>
<dbReference type="PDB" id="7TOP">
    <property type="method" value="EM"/>
    <property type="resolution" value="2.40 A"/>
    <property type="chains" value="AL33=1-107"/>
</dbReference>
<dbReference type="PDB" id="7U0H">
    <property type="method" value="EM"/>
    <property type="resolution" value="2.76 A"/>
    <property type="chains" value="f=1-107"/>
</dbReference>
<dbReference type="PDB" id="7UG6">
    <property type="method" value="EM"/>
    <property type="resolution" value="2.90 A"/>
    <property type="chains" value="f=1-107"/>
</dbReference>
<dbReference type="PDB" id="7UOO">
    <property type="method" value="EM"/>
    <property type="resolution" value="2.34 A"/>
    <property type="chains" value="f=1-107"/>
</dbReference>
<dbReference type="PDB" id="7UQB">
    <property type="method" value="EM"/>
    <property type="resolution" value="2.43 A"/>
    <property type="chains" value="f=1-107"/>
</dbReference>
<dbReference type="PDB" id="7UQZ">
    <property type="method" value="EM"/>
    <property type="resolution" value="2.44 A"/>
    <property type="chains" value="f=1-107"/>
</dbReference>
<dbReference type="PDB" id="7V08">
    <property type="method" value="EM"/>
    <property type="resolution" value="2.36 A"/>
    <property type="chains" value="f=1-107"/>
</dbReference>
<dbReference type="PDB" id="7Z34">
    <property type="method" value="EM"/>
    <property type="resolution" value="3.80 A"/>
    <property type="chains" value="f=1-107"/>
</dbReference>
<dbReference type="PDB" id="7ZPQ">
    <property type="method" value="EM"/>
    <property type="resolution" value="3.47 A"/>
    <property type="chains" value="Be=2-107"/>
</dbReference>
<dbReference type="PDB" id="7ZRS">
    <property type="method" value="EM"/>
    <property type="resolution" value="4.80 A"/>
    <property type="chains" value="Be=2-107"/>
</dbReference>
<dbReference type="PDB" id="7ZS5">
    <property type="method" value="EM"/>
    <property type="resolution" value="3.20 A"/>
    <property type="chains" value="Bg=2-107"/>
</dbReference>
<dbReference type="PDB" id="7ZUW">
    <property type="method" value="EM"/>
    <property type="resolution" value="4.30 A"/>
    <property type="chains" value="Be=2-107"/>
</dbReference>
<dbReference type="PDB" id="7ZUX">
    <property type="method" value="EM"/>
    <property type="resolution" value="2.50 A"/>
    <property type="chains" value="Ee=2-107"/>
</dbReference>
<dbReference type="PDB" id="7ZW0">
    <property type="method" value="EM"/>
    <property type="resolution" value="2.40 A"/>
    <property type="chains" value="Li=1-107"/>
</dbReference>
<dbReference type="PDB" id="8AAF">
    <property type="method" value="EM"/>
    <property type="resolution" value="2.50 A"/>
    <property type="chains" value="S=1-107"/>
</dbReference>
<dbReference type="PDB" id="8AGT">
    <property type="method" value="EM"/>
    <property type="resolution" value="2.60 A"/>
    <property type="chains" value="S=1-107"/>
</dbReference>
<dbReference type="PDB" id="8AGU">
    <property type="method" value="EM"/>
    <property type="resolution" value="2.70 A"/>
    <property type="chains" value="S=1-107"/>
</dbReference>
<dbReference type="PDB" id="8AGV">
    <property type="method" value="EM"/>
    <property type="resolution" value="2.60 A"/>
    <property type="chains" value="S=1-107"/>
</dbReference>
<dbReference type="PDB" id="8AGW">
    <property type="method" value="EM"/>
    <property type="resolution" value="2.60 A"/>
    <property type="chains" value="S=1-107"/>
</dbReference>
<dbReference type="PDB" id="8AGX">
    <property type="method" value="EM"/>
    <property type="resolution" value="2.40 A"/>
    <property type="chains" value="S=1-107"/>
</dbReference>
<dbReference type="PDB" id="8AGZ">
    <property type="method" value="EM"/>
    <property type="resolution" value="2.60 A"/>
    <property type="chains" value="S=1-107"/>
</dbReference>
<dbReference type="PDB" id="8BIP">
    <property type="method" value="EM"/>
    <property type="resolution" value="3.10 A"/>
    <property type="chains" value="Lf=2-107"/>
</dbReference>
<dbReference type="PDB" id="8BJQ">
    <property type="method" value="EM"/>
    <property type="resolution" value="3.80 A"/>
    <property type="chains" value="Lf=2-107"/>
</dbReference>
<dbReference type="PDB" id="8BN3">
    <property type="method" value="EM"/>
    <property type="resolution" value="2.40 A"/>
    <property type="chains" value="O3=2-107"/>
</dbReference>
<dbReference type="PDB" id="8BQD">
    <property type="method" value="EM"/>
    <property type="resolution" value="3.90 A"/>
    <property type="chains" value="BK=2-107"/>
</dbReference>
<dbReference type="PDB" id="8BQX">
    <property type="method" value="EM"/>
    <property type="resolution" value="3.80 A"/>
    <property type="chains" value="BK=2-107"/>
</dbReference>
<dbReference type="PDB" id="8CCS">
    <property type="method" value="EM"/>
    <property type="resolution" value="1.97 A"/>
    <property type="chains" value="R=1-107"/>
</dbReference>
<dbReference type="PDB" id="8CDL">
    <property type="method" value="EM"/>
    <property type="resolution" value="2.72 A"/>
    <property type="chains" value="R=1-107"/>
</dbReference>
<dbReference type="PDB" id="8CDR">
    <property type="method" value="EM"/>
    <property type="resolution" value="2.04 A"/>
    <property type="chains" value="R=1-107"/>
</dbReference>
<dbReference type="PDB" id="8CEH">
    <property type="method" value="EM"/>
    <property type="resolution" value="2.05 A"/>
    <property type="chains" value="R=1-107"/>
</dbReference>
<dbReference type="PDB" id="8CF5">
    <property type="method" value="EM"/>
    <property type="resolution" value="2.71 A"/>
    <property type="chains" value="R=1-107"/>
</dbReference>
<dbReference type="PDB" id="8CG8">
    <property type="method" value="EM"/>
    <property type="resolution" value="2.57 A"/>
    <property type="chains" value="R=1-107"/>
</dbReference>
<dbReference type="PDB" id="8CGN">
    <property type="method" value="EM"/>
    <property type="resolution" value="2.28 A"/>
    <property type="chains" value="R=1-107"/>
</dbReference>
<dbReference type="PDB" id="8CIV">
    <property type="method" value="EM"/>
    <property type="resolution" value="2.47 A"/>
    <property type="chains" value="R=1-107"/>
</dbReference>
<dbReference type="PDB" id="8CKU">
    <property type="method" value="EM"/>
    <property type="resolution" value="3.11 A"/>
    <property type="chains" value="R=1-107"/>
</dbReference>
<dbReference type="PDB" id="8CMJ">
    <property type="method" value="EM"/>
    <property type="resolution" value="3.79 A"/>
    <property type="chains" value="R=1-107"/>
</dbReference>
<dbReference type="PDB" id="8E5T">
    <property type="method" value="EM"/>
    <property type="resolution" value="4.00 A"/>
    <property type="chains" value="f=1-107"/>
</dbReference>
<dbReference type="PDB" id="8EUB">
    <property type="method" value="EM"/>
    <property type="resolution" value="2.52 A"/>
    <property type="chains" value="Af=1-107"/>
</dbReference>
<dbReference type="PDB" id="8EVP">
    <property type="method" value="EM"/>
    <property type="resolution" value="2.38 A"/>
    <property type="chains" value="Af=1-107"/>
</dbReference>
<dbReference type="PDB" id="8EVQ">
    <property type="method" value="EM"/>
    <property type="resolution" value="2.72 A"/>
    <property type="chains" value="Af=1-107"/>
</dbReference>
<dbReference type="PDB" id="8EVR">
    <property type="method" value="EM"/>
    <property type="resolution" value="2.87 A"/>
    <property type="chains" value="Af=1-107"/>
</dbReference>
<dbReference type="PDB" id="8EVS">
    <property type="method" value="EM"/>
    <property type="resolution" value="2.62 A"/>
    <property type="chains" value="Af=1-107"/>
</dbReference>
<dbReference type="PDB" id="8EVT">
    <property type="method" value="EM"/>
    <property type="resolution" value="2.20 A"/>
    <property type="chains" value="Af=1-107"/>
</dbReference>
<dbReference type="PDB" id="8EWB">
    <property type="method" value="EM"/>
    <property type="resolution" value="2.87 A"/>
    <property type="chains" value="Af=1-107"/>
</dbReference>
<dbReference type="PDB" id="8EWC">
    <property type="method" value="EM"/>
    <property type="resolution" value="2.45 A"/>
    <property type="chains" value="Af=1-107"/>
</dbReference>
<dbReference type="PDB" id="8HFR">
    <property type="method" value="EM"/>
    <property type="resolution" value="2.64 A"/>
    <property type="chains" value="f7=1-107"/>
</dbReference>
<dbReference type="PDB" id="8K2D">
    <property type="method" value="EM"/>
    <property type="resolution" value="3.20 A"/>
    <property type="chains" value="Lf=1-107"/>
</dbReference>
<dbReference type="PDB" id="8K82">
    <property type="method" value="EM"/>
    <property type="resolution" value="3.00 A"/>
    <property type="chains" value="Lf=1-107"/>
</dbReference>
<dbReference type="PDB" id="8P4V">
    <property type="method" value="X-ray"/>
    <property type="resolution" value="3.16 A"/>
    <property type="chains" value="AG/DH=1-107"/>
</dbReference>
<dbReference type="PDB" id="8P8M">
    <property type="method" value="EM"/>
    <property type="resolution" value="2.66 A"/>
    <property type="chains" value="RF=1-107"/>
</dbReference>
<dbReference type="PDB" id="8P8N">
    <property type="method" value="EM"/>
    <property type="resolution" value="2.15 A"/>
    <property type="chains" value="RF=1-107"/>
</dbReference>
<dbReference type="PDB" id="8P8U">
    <property type="method" value="EM"/>
    <property type="resolution" value="2.23 A"/>
    <property type="chains" value="RF=1-107"/>
</dbReference>
<dbReference type="PDB" id="8P9A">
    <property type="method" value="X-ray"/>
    <property type="resolution" value="2.90 A"/>
    <property type="chains" value="AG/DH=1-107"/>
</dbReference>
<dbReference type="PDB" id="8PFR">
    <property type="method" value="EM"/>
    <property type="resolution" value="2.15 A"/>
    <property type="chains" value="RF=1-107"/>
</dbReference>
<dbReference type="PDB" id="8T2X">
    <property type="method" value="EM"/>
    <property type="resolution" value="2.46 A"/>
    <property type="chains" value="Af=1-107"/>
</dbReference>
<dbReference type="PDB" id="8T2Y">
    <property type="method" value="EM"/>
    <property type="resolution" value="2.20 A"/>
    <property type="chains" value="Af=1-107"/>
</dbReference>
<dbReference type="PDB" id="8T2Z">
    <property type="method" value="EM"/>
    <property type="resolution" value="2.40 A"/>
    <property type="chains" value="Af=1-107"/>
</dbReference>
<dbReference type="PDB" id="8T30">
    <property type="method" value="EM"/>
    <property type="resolution" value="2.88 A"/>
    <property type="chains" value="Af=1-107"/>
</dbReference>
<dbReference type="PDB" id="8T3A">
    <property type="method" value="EM"/>
    <property type="resolution" value="2.86 A"/>
    <property type="chains" value="Af=1-107"/>
</dbReference>
<dbReference type="PDB" id="8T3B">
    <property type="method" value="EM"/>
    <property type="resolution" value="3.08 A"/>
    <property type="chains" value="Af=1-107"/>
</dbReference>
<dbReference type="PDB" id="8T3C">
    <property type="method" value="EM"/>
    <property type="resolution" value="3.86 A"/>
    <property type="chains" value="Af=1-107"/>
</dbReference>
<dbReference type="PDB" id="8T3D">
    <property type="method" value="EM"/>
    <property type="resolution" value="2.95 A"/>
    <property type="chains" value="Af=1-107"/>
</dbReference>
<dbReference type="PDB" id="8T3E">
    <property type="method" value="EM"/>
    <property type="resolution" value="3.04 A"/>
    <property type="chains" value="Af=1-107"/>
</dbReference>
<dbReference type="PDB" id="8T3F">
    <property type="method" value="EM"/>
    <property type="resolution" value="3.09 A"/>
    <property type="chains" value="Af=1-107"/>
</dbReference>
<dbReference type="PDB" id="8UT0">
    <property type="method" value="EM"/>
    <property type="resolution" value="3.22 A"/>
    <property type="chains" value="Lh=2-107"/>
</dbReference>
<dbReference type="PDB" id="8UTI">
    <property type="method" value="EM"/>
    <property type="resolution" value="3.13 A"/>
    <property type="chains" value="Lh=2-107"/>
</dbReference>
<dbReference type="PDB" id="8V83">
    <property type="method" value="EM"/>
    <property type="resolution" value="2.53 A"/>
    <property type="chains" value="f=1-107"/>
</dbReference>
<dbReference type="PDB" id="8V84">
    <property type="method" value="EM"/>
    <property type="resolution" value="2.70 A"/>
    <property type="chains" value="f=1-107"/>
</dbReference>
<dbReference type="PDB" id="8V87">
    <property type="method" value="EM"/>
    <property type="resolution" value="2.66 A"/>
    <property type="chains" value="f=1-107"/>
</dbReference>
<dbReference type="PDB" id="8XU8">
    <property type="method" value="EM"/>
    <property type="resolution" value="3.40 A"/>
    <property type="chains" value="h=2-107"/>
</dbReference>
<dbReference type="PDB" id="8Y0U">
    <property type="method" value="EM"/>
    <property type="resolution" value="3.59 A"/>
    <property type="chains" value="Lf=1-107"/>
</dbReference>
<dbReference type="PDB" id="8YLD">
    <property type="method" value="EM"/>
    <property type="resolution" value="3.90 A"/>
    <property type="chains" value="h=2-107"/>
</dbReference>
<dbReference type="PDB" id="8YLR">
    <property type="method" value="EM"/>
    <property type="resolution" value="3.90 A"/>
    <property type="chains" value="h=2-107"/>
</dbReference>
<dbReference type="PDB" id="8Z70">
    <property type="method" value="EM"/>
    <property type="resolution" value="3.20 A"/>
    <property type="chains" value="h=2-107"/>
</dbReference>
<dbReference type="PDB" id="8Z71">
    <property type="method" value="EM"/>
    <property type="resolution" value="3.60 A"/>
    <property type="chains" value="h=2-107"/>
</dbReference>
<dbReference type="PDB" id="9F9S">
    <property type="method" value="EM"/>
    <property type="resolution" value="2.90 A"/>
    <property type="chains" value="Ll/Ml=1-107"/>
</dbReference>
<dbReference type="PDBsum" id="3J6X"/>
<dbReference type="PDBsum" id="3J6Y"/>
<dbReference type="PDBsum" id="3J77"/>
<dbReference type="PDBsum" id="3J78"/>
<dbReference type="PDBsum" id="3JCT"/>
<dbReference type="PDBsum" id="4U3M"/>
<dbReference type="PDBsum" id="4U3N"/>
<dbReference type="PDBsum" id="4U3U"/>
<dbReference type="PDBsum" id="4U4N"/>
<dbReference type="PDBsum" id="4U4O"/>
<dbReference type="PDBsum" id="4U4Q"/>
<dbReference type="PDBsum" id="4U4R"/>
<dbReference type="PDBsum" id="4U4U"/>
<dbReference type="PDBsum" id="4U4Y"/>
<dbReference type="PDBsum" id="4U4Z"/>
<dbReference type="PDBsum" id="4U50"/>
<dbReference type="PDBsum" id="4U51"/>
<dbReference type="PDBsum" id="4U52"/>
<dbReference type="PDBsum" id="4U53"/>
<dbReference type="PDBsum" id="4U55"/>
<dbReference type="PDBsum" id="4U56"/>
<dbReference type="PDBsum" id="4U6F"/>
<dbReference type="PDBsum" id="4V6I"/>
<dbReference type="PDBsum" id="4V7F"/>
<dbReference type="PDBsum" id="4V88"/>
<dbReference type="PDBsum" id="4V8T"/>
<dbReference type="PDBsum" id="4V8Y"/>
<dbReference type="PDBsum" id="4V8Z"/>
<dbReference type="PDBsum" id="4V91"/>
<dbReference type="PDBsum" id="5APN"/>
<dbReference type="PDBsum" id="5APO"/>
<dbReference type="PDBsum" id="5DAT"/>
<dbReference type="PDBsum" id="5DC3"/>
<dbReference type="PDBsum" id="5DGE"/>
<dbReference type="PDBsum" id="5DGF"/>
<dbReference type="PDBsum" id="5DGV"/>
<dbReference type="PDBsum" id="5FCI"/>
<dbReference type="PDBsum" id="5FCJ"/>
<dbReference type="PDBsum" id="5GAK"/>
<dbReference type="PDBsum" id="5H4P"/>
<dbReference type="PDBsum" id="5I4L"/>
<dbReference type="PDBsum" id="5JCS"/>
<dbReference type="PDBsum" id="5JUO"/>
<dbReference type="PDBsum" id="5JUP"/>
<dbReference type="PDBsum" id="5JUS"/>
<dbReference type="PDBsum" id="5JUT"/>
<dbReference type="PDBsum" id="5JUU"/>
<dbReference type="PDBsum" id="5LYB"/>
<dbReference type="PDBsum" id="5M1J"/>
<dbReference type="PDBsum" id="5MC6"/>
<dbReference type="PDBsum" id="5MEI"/>
<dbReference type="PDBsum" id="5NDG"/>
<dbReference type="PDBsum" id="5NDV"/>
<dbReference type="PDBsum" id="5NDW"/>
<dbReference type="PDBsum" id="5OBM"/>
<dbReference type="PDBsum" id="5ON6"/>
<dbReference type="PDBsum" id="5T62"/>
<dbReference type="PDBsum" id="5T6R"/>
<dbReference type="PDBsum" id="5TBW"/>
<dbReference type="PDBsum" id="5TGA"/>
<dbReference type="PDBsum" id="5TGM"/>
<dbReference type="PDBsum" id="5Z3G"/>
<dbReference type="PDBsum" id="6C0F"/>
<dbReference type="PDBsum" id="6CB1"/>
<dbReference type="PDBsum" id="6ELZ"/>
<dbReference type="PDBsum" id="6EM1"/>
<dbReference type="PDBsum" id="6EM3"/>
<dbReference type="PDBsum" id="6EM4"/>
<dbReference type="PDBsum" id="6EM5"/>
<dbReference type="PDBsum" id="6FT6"/>
<dbReference type="PDBsum" id="6GQ1"/>
<dbReference type="PDBsum" id="6GQB"/>
<dbReference type="PDBsum" id="6GQV"/>
<dbReference type="PDBsum" id="6HD7"/>
<dbReference type="PDBsum" id="6HHQ"/>
<dbReference type="PDBsum" id="6I7O"/>
<dbReference type="PDBsum" id="6M62"/>
<dbReference type="PDBsum" id="6N8J"/>
<dbReference type="PDBsum" id="6N8K"/>
<dbReference type="PDBsum" id="6N8L"/>
<dbReference type="PDBsum" id="6N8M"/>
<dbReference type="PDBsum" id="6N8N"/>
<dbReference type="PDBsum" id="6N8O"/>
<dbReference type="PDBsum" id="6OIG"/>
<dbReference type="PDBsum" id="6Q8Y"/>
<dbReference type="PDBsum" id="6QIK"/>
<dbReference type="PDBsum" id="6QT0"/>
<dbReference type="PDBsum" id="6QTZ"/>
<dbReference type="PDBsum" id="6R84"/>
<dbReference type="PDBsum" id="6R86"/>
<dbReference type="PDBsum" id="6R87"/>
<dbReference type="PDBsum" id="6RI5"/>
<dbReference type="PDBsum" id="6RZZ"/>
<dbReference type="PDBsum" id="6S05"/>
<dbReference type="PDBsum" id="6S47"/>
<dbReference type="PDBsum" id="6SNT"/>
<dbReference type="PDBsum" id="6SV4"/>
<dbReference type="PDBsum" id="6T4Q"/>
<dbReference type="PDBsum" id="6T7I"/>
<dbReference type="PDBsum" id="6T7T"/>
<dbReference type="PDBsum" id="6T83"/>
<dbReference type="PDBsum" id="6TB3"/>
<dbReference type="PDBsum" id="6TNU"/>
<dbReference type="PDBsum" id="6WOO"/>
<dbReference type="PDBsum" id="6XIQ"/>
<dbReference type="PDBsum" id="6XIR"/>
<dbReference type="PDBsum" id="6YLG"/>
<dbReference type="PDBsum" id="6YLH"/>
<dbReference type="PDBsum" id="6YLX"/>
<dbReference type="PDBsum" id="6YLY"/>
<dbReference type="PDBsum" id="6Z6J"/>
<dbReference type="PDBsum" id="6Z6K"/>
<dbReference type="PDBsum" id="7AZY"/>
<dbReference type="PDBsum" id="7B7D"/>
<dbReference type="PDBsum" id="7BT6"/>
<dbReference type="PDBsum" id="7BTB"/>
<dbReference type="PDBsum" id="7MPI"/>
<dbReference type="PDBsum" id="7MPJ"/>
<dbReference type="PDBsum" id="7N8B"/>
<dbReference type="PDBsum" id="7NAC"/>
<dbReference type="PDBsum" id="7NRC"/>
<dbReference type="PDBsum" id="7NRD"/>
<dbReference type="PDBsum" id="7OF1"/>
<dbReference type="PDBsum" id="7OH3"/>
<dbReference type="PDBsum" id="7OHP"/>
<dbReference type="PDBsum" id="7OHQ"/>
<dbReference type="PDBsum" id="7OHR"/>
<dbReference type="PDBsum" id="7OHS"/>
<dbReference type="PDBsum" id="7OHT"/>
<dbReference type="PDBsum" id="7OHU"/>
<dbReference type="PDBsum" id="7OHV"/>
<dbReference type="PDBsum" id="7OHW"/>
<dbReference type="PDBsum" id="7OHX"/>
<dbReference type="PDBsum" id="7OHY"/>
<dbReference type="PDBsum" id="7R7A"/>
<dbReference type="PDBsum" id="7TOO"/>
<dbReference type="PDBsum" id="7TOP"/>
<dbReference type="PDBsum" id="7U0H"/>
<dbReference type="PDBsum" id="7UG6"/>
<dbReference type="PDBsum" id="7UOO"/>
<dbReference type="PDBsum" id="7UQB"/>
<dbReference type="PDBsum" id="7UQZ"/>
<dbReference type="PDBsum" id="7V08"/>
<dbReference type="PDBsum" id="7Z34"/>
<dbReference type="PDBsum" id="7ZPQ"/>
<dbReference type="PDBsum" id="7ZRS"/>
<dbReference type="PDBsum" id="7ZS5"/>
<dbReference type="PDBsum" id="7ZUW"/>
<dbReference type="PDBsum" id="7ZUX"/>
<dbReference type="PDBsum" id="7ZW0"/>
<dbReference type="PDBsum" id="8AAF"/>
<dbReference type="PDBsum" id="8AGT"/>
<dbReference type="PDBsum" id="8AGU"/>
<dbReference type="PDBsum" id="8AGV"/>
<dbReference type="PDBsum" id="8AGW"/>
<dbReference type="PDBsum" id="8AGX"/>
<dbReference type="PDBsum" id="8AGZ"/>
<dbReference type="PDBsum" id="8BIP"/>
<dbReference type="PDBsum" id="8BJQ"/>
<dbReference type="PDBsum" id="8BN3"/>
<dbReference type="PDBsum" id="8BQD"/>
<dbReference type="PDBsum" id="8BQX"/>
<dbReference type="PDBsum" id="8CCS"/>
<dbReference type="PDBsum" id="8CDL"/>
<dbReference type="PDBsum" id="8CDR"/>
<dbReference type="PDBsum" id="8CEH"/>
<dbReference type="PDBsum" id="8CF5"/>
<dbReference type="PDBsum" id="8CG8"/>
<dbReference type="PDBsum" id="8CGN"/>
<dbReference type="PDBsum" id="8CIV"/>
<dbReference type="PDBsum" id="8CKU"/>
<dbReference type="PDBsum" id="8CMJ"/>
<dbReference type="PDBsum" id="8E5T"/>
<dbReference type="PDBsum" id="8EUB"/>
<dbReference type="PDBsum" id="8EVP"/>
<dbReference type="PDBsum" id="8EVQ"/>
<dbReference type="PDBsum" id="8EVR"/>
<dbReference type="PDBsum" id="8EVS"/>
<dbReference type="PDBsum" id="8EVT"/>
<dbReference type="PDBsum" id="8EWB"/>
<dbReference type="PDBsum" id="8EWC"/>
<dbReference type="PDBsum" id="8HFR"/>
<dbReference type="PDBsum" id="8K2D"/>
<dbReference type="PDBsum" id="8K82"/>
<dbReference type="PDBsum" id="8P4V"/>
<dbReference type="PDBsum" id="8P8M"/>
<dbReference type="PDBsum" id="8P8N"/>
<dbReference type="PDBsum" id="8P8U"/>
<dbReference type="PDBsum" id="8P9A"/>
<dbReference type="PDBsum" id="8PFR"/>
<dbReference type="PDBsum" id="8T2X"/>
<dbReference type="PDBsum" id="8T2Y"/>
<dbReference type="PDBsum" id="8T2Z"/>
<dbReference type="PDBsum" id="8T30"/>
<dbReference type="PDBsum" id="8T3A"/>
<dbReference type="PDBsum" id="8T3B"/>
<dbReference type="PDBsum" id="8T3C"/>
<dbReference type="PDBsum" id="8T3D"/>
<dbReference type="PDBsum" id="8T3E"/>
<dbReference type="PDBsum" id="8T3F"/>
<dbReference type="PDBsum" id="8UT0"/>
<dbReference type="PDBsum" id="8UTI"/>
<dbReference type="PDBsum" id="8V83"/>
<dbReference type="PDBsum" id="8V84"/>
<dbReference type="PDBsum" id="8V87"/>
<dbReference type="PDBsum" id="8XU8"/>
<dbReference type="PDBsum" id="8Y0U"/>
<dbReference type="PDBsum" id="8YLD"/>
<dbReference type="PDBsum" id="8YLR"/>
<dbReference type="PDBsum" id="8Z70"/>
<dbReference type="PDBsum" id="8Z71"/>
<dbReference type="PDBsum" id="9F9S"/>
<dbReference type="EMDB" id="EMD-0047"/>
<dbReference type="EMDB" id="EMD-0048"/>
<dbReference type="EMDB" id="EMD-0049"/>
<dbReference type="EMDB" id="EMD-0202"/>
<dbReference type="EMDB" id="EMD-0369"/>
<dbReference type="EMDB" id="EMD-0370"/>
<dbReference type="EMDB" id="EMD-0371"/>
<dbReference type="EMDB" id="EMD-0372"/>
<dbReference type="EMDB" id="EMD-0373"/>
<dbReference type="EMDB" id="EMD-0374"/>
<dbReference type="EMDB" id="EMD-10068"/>
<dbReference type="EMDB" id="EMD-10071"/>
<dbReference type="EMDB" id="EMD-10098"/>
<dbReference type="EMDB" id="EMD-10262"/>
<dbReference type="EMDB" id="EMD-10315"/>
<dbReference type="EMDB" id="EMD-10377"/>
<dbReference type="EMDB" id="EMD-10396"/>
<dbReference type="EMDB" id="EMD-10397"/>
<dbReference type="EMDB" id="EMD-10398"/>
<dbReference type="EMDB" id="EMD-10431"/>
<dbReference type="EMDB" id="EMD-10537"/>
<dbReference type="EMDB" id="EMD-10838"/>
<dbReference type="EMDB" id="EMD-10839"/>
<dbReference type="EMDB" id="EMD-10841"/>
<dbReference type="EMDB" id="EMD-10842"/>
<dbReference type="EMDB" id="EMD-11096"/>
<dbReference type="EMDB" id="EMD-11097"/>
<dbReference type="EMDB" id="EMD-11951"/>
<dbReference type="EMDB" id="EMD-12081"/>
<dbReference type="EMDB" id="EMD-12534"/>
<dbReference type="EMDB" id="EMD-12535"/>
<dbReference type="EMDB" id="EMD-12866"/>
<dbReference type="EMDB" id="EMD-12892"/>
<dbReference type="EMDB" id="EMD-12904"/>
<dbReference type="EMDB" id="EMD-12905"/>
<dbReference type="EMDB" id="EMD-12906"/>
<dbReference type="EMDB" id="EMD-12907"/>
<dbReference type="EMDB" id="EMD-12908"/>
<dbReference type="EMDB" id="EMD-12909"/>
<dbReference type="EMDB" id="EMD-12910"/>
<dbReference type="EMDB" id="EMD-12911"/>
<dbReference type="EMDB" id="EMD-12912"/>
<dbReference type="EMDB" id="EMD-12913"/>
<dbReference type="EMDB" id="EMD-14471"/>
<dbReference type="EMDB" id="EMD-14861"/>
<dbReference type="EMDB" id="EMD-14921"/>
<dbReference type="EMDB" id="EMD-14926"/>
<dbReference type="EMDB" id="EMD-14978"/>
<dbReference type="EMDB" id="EMD-14979"/>
<dbReference type="EMDB" id="EMD-14990"/>
<dbReference type="EMDB" id="EMD-15296"/>
<dbReference type="EMDB" id="EMD-15423"/>
<dbReference type="EMDB" id="EMD-15424"/>
<dbReference type="EMDB" id="EMD-15425"/>
<dbReference type="EMDB" id="EMD-15426"/>
<dbReference type="EMDB" id="EMD-15427"/>
<dbReference type="EMDB" id="EMD-15428"/>
<dbReference type="EMDB" id="EMD-16086"/>
<dbReference type="EMDB" id="EMD-16090"/>
<dbReference type="EMDB" id="EMD-16127"/>
<dbReference type="EMDB" id="EMD-16182"/>
<dbReference type="EMDB" id="EMD-16191"/>
<dbReference type="EMDB" id="EMD-16563"/>
<dbReference type="EMDB" id="EMD-16591"/>
<dbReference type="EMDB" id="EMD-16594"/>
<dbReference type="EMDB" id="EMD-16609"/>
<dbReference type="EMDB" id="EMD-16616"/>
<dbReference type="EMDB" id="EMD-16634"/>
<dbReference type="EMDB" id="EMD-16648"/>
<dbReference type="EMDB" id="EMD-16684"/>
<dbReference type="EMDB" id="EMD-16702"/>
<dbReference type="EMDB" id="EMD-16729"/>
<dbReference type="EMDB" id="EMD-17549"/>
<dbReference type="EMDB" id="EMD-17550"/>
<dbReference type="EMDB" id="EMD-17552"/>
<dbReference type="EMDB" id="EMD-17653"/>
<dbReference type="EMDB" id="EMD-20077"/>
<dbReference type="EMDB" id="EMD-21859"/>
<dbReference type="EMDB" id="EMD-22196"/>
<dbReference type="EMDB" id="EMD-22198"/>
<dbReference type="EMDB" id="EMD-23934"/>
<dbReference type="EMDB" id="EMD-23935"/>
<dbReference type="EMDB" id="EMD-24235"/>
<dbReference type="EMDB" id="EMD-24269"/>
<dbReference type="EMDB" id="EMD-24296"/>
<dbReference type="EMDB" id="EMD-26033"/>
<dbReference type="EMDB" id="EMD-26034"/>
<dbReference type="EMDB" id="EMD-26259"/>
<dbReference type="EMDB" id="EMD-26485"/>
<dbReference type="EMDB" id="EMD-26651"/>
<dbReference type="EMDB" id="EMD-26686"/>
<dbReference type="EMDB" id="EMD-26703"/>
<dbReference type="EMDB" id="EMD-26941"/>
<dbReference type="EMDB" id="EMD-27919"/>
<dbReference type="EMDB" id="EMD-28610"/>
<dbReference type="EMDB" id="EMD-28632"/>
<dbReference type="EMDB" id="EMD-28633"/>
<dbReference type="EMDB" id="EMD-28634"/>
<dbReference type="EMDB" id="EMD-28635"/>
<dbReference type="EMDB" id="EMD-28636"/>
<dbReference type="EMDB" id="EMD-28642"/>
<dbReference type="EMDB" id="EMD-28643"/>
<dbReference type="EMDB" id="EMD-30108"/>
<dbReference type="EMDB" id="EMD-30170"/>
<dbReference type="EMDB" id="EMD-30174"/>
<dbReference type="EMDB" id="EMD-3461"/>
<dbReference type="EMDB" id="EMD-34725"/>
<dbReference type="EMDB" id="EMD-36839"/>
<dbReference type="EMDB" id="EMD-36945"/>
<dbReference type="EMDB" id="EMD-38660"/>
<dbReference type="EMDB" id="EMD-40990"/>
<dbReference type="EMDB" id="EMD-40991"/>
<dbReference type="EMDB" id="EMD-40992"/>
<dbReference type="EMDB" id="EMD-40993"/>
<dbReference type="EMDB" id="EMD-40997"/>
<dbReference type="EMDB" id="EMD-40998"/>
<dbReference type="EMDB" id="EMD-40999"/>
<dbReference type="EMDB" id="EMD-41000"/>
<dbReference type="EMDB" id="EMD-41001"/>
<dbReference type="EMDB" id="EMD-41002"/>
<dbReference type="EMDB" id="EMD-4140"/>
<dbReference type="EMDB" id="EMD-42525"/>
<dbReference type="EMDB" id="EMD-42540"/>
<dbReference type="EMDB" id="EMD-43017"/>
<dbReference type="EMDB" id="EMD-4302"/>
<dbReference type="EMDB" id="EMD-43021"/>
<dbReference type="EMDB" id="EMD-43027"/>
<dbReference type="EMDB" id="EMD-4427"/>
<dbReference type="EMDB" id="EMD-4474"/>
<dbReference type="EMDB" id="EMD-4560"/>
<dbReference type="EMDB" id="EMD-4630"/>
<dbReference type="EMDB" id="EMD-4636"/>
<dbReference type="EMDB" id="EMD-4751"/>
<dbReference type="EMDB" id="EMD-4752"/>
<dbReference type="EMDB" id="EMD-4753"/>
<dbReference type="EMDB" id="EMD-4884"/>
<dbReference type="EMDB" id="EMD-50259"/>
<dbReference type="EMDB" id="EMD-6878"/>
<dbReference type="EMDB" id="EMD-7324"/>
<dbReference type="EMDB" id="EMD-7445"/>
<dbReference type="EMDB" id="EMD-8362"/>
<dbReference type="EMDB" id="EMD-8368"/>
<dbReference type="SMR" id="P05744"/>
<dbReference type="BioGRID" id="36040">
    <property type="interactions" value="267"/>
</dbReference>
<dbReference type="ComplexPortal" id="CPX-1601">
    <property type="entry name" value="60S cytosolic large ribosomal subunit"/>
</dbReference>
<dbReference type="FunCoup" id="P05744">
    <property type="interactions" value="1016"/>
</dbReference>
<dbReference type="IntAct" id="P05744">
    <property type="interactions" value="124"/>
</dbReference>
<dbReference type="MINT" id="P05744"/>
<dbReference type="STRING" id="4932.YPL143W"/>
<dbReference type="iPTMnet" id="P05744"/>
<dbReference type="PaxDb" id="4932-YPL143W"/>
<dbReference type="PeptideAtlas" id="P05744"/>
<dbReference type="TopDownProteomics" id="P05744"/>
<dbReference type="EnsemblFungi" id="YPL143W_mRNA">
    <property type="protein sequence ID" value="YPL143W"/>
    <property type="gene ID" value="YPL143W"/>
</dbReference>
<dbReference type="GeneID" id="855960"/>
<dbReference type="KEGG" id="sce:YPL143W"/>
<dbReference type="AGR" id="SGD:S000006064"/>
<dbReference type="SGD" id="S000006064">
    <property type="gene designation" value="RPL33A"/>
</dbReference>
<dbReference type="VEuPathDB" id="FungiDB:YPL143W"/>
<dbReference type="eggNOG" id="KOG0887">
    <property type="taxonomic scope" value="Eukaryota"/>
</dbReference>
<dbReference type="GeneTree" id="ENSGT00390000016972"/>
<dbReference type="HOGENOM" id="CLU_100745_2_0_1"/>
<dbReference type="InParanoid" id="P05744"/>
<dbReference type="OMA" id="YRTNKHH"/>
<dbReference type="OrthoDB" id="1166329at2759"/>
<dbReference type="BioCyc" id="YEAST:G3O-34040-MONOMER"/>
<dbReference type="Reactome" id="R-SCE-156827">
    <property type="pathway name" value="L13a-mediated translational silencing of Ceruloplasmin expression"/>
</dbReference>
<dbReference type="Reactome" id="R-SCE-1799339">
    <property type="pathway name" value="SRP-dependent cotranslational protein targeting to membrane"/>
</dbReference>
<dbReference type="Reactome" id="R-SCE-72689">
    <property type="pathway name" value="Formation of a pool of free 40S subunits"/>
</dbReference>
<dbReference type="Reactome" id="R-SCE-72706">
    <property type="pathway name" value="GTP hydrolysis and joining of the 60S ribosomal subunit"/>
</dbReference>
<dbReference type="Reactome" id="R-SCE-975956">
    <property type="pathway name" value="Nonsense Mediated Decay (NMD) independent of the Exon Junction Complex (EJC)"/>
</dbReference>
<dbReference type="Reactome" id="R-SCE-975957">
    <property type="pathway name" value="Nonsense Mediated Decay (NMD) enhanced by the Exon Junction Complex (EJC)"/>
</dbReference>
<dbReference type="BioGRID-ORCS" id="855960">
    <property type="hits" value="5 hits in 10 CRISPR screens"/>
</dbReference>
<dbReference type="PRO" id="PR:P05744"/>
<dbReference type="Proteomes" id="UP000002311">
    <property type="component" value="Chromosome XVI"/>
</dbReference>
<dbReference type="RNAct" id="P05744">
    <property type="molecule type" value="protein"/>
</dbReference>
<dbReference type="GO" id="GO:0005829">
    <property type="term" value="C:cytosol"/>
    <property type="evidence" value="ECO:0000304"/>
    <property type="project" value="Reactome"/>
</dbReference>
<dbReference type="GO" id="GO:0022625">
    <property type="term" value="C:cytosolic large ribosomal subunit"/>
    <property type="evidence" value="ECO:0000314"/>
    <property type="project" value="SGD"/>
</dbReference>
<dbReference type="GO" id="GO:0003735">
    <property type="term" value="F:structural constituent of ribosome"/>
    <property type="evidence" value="ECO:0000314"/>
    <property type="project" value="SGD"/>
</dbReference>
<dbReference type="GO" id="GO:0002181">
    <property type="term" value="P:cytoplasmic translation"/>
    <property type="evidence" value="ECO:0000314"/>
    <property type="project" value="SGD"/>
</dbReference>
<dbReference type="GO" id="GO:0000027">
    <property type="term" value="P:ribosomal large subunit assembly"/>
    <property type="evidence" value="ECO:0000315"/>
    <property type="project" value="SGD"/>
</dbReference>
<dbReference type="GO" id="GO:0042273">
    <property type="term" value="P:ribosomal large subunit biogenesis"/>
    <property type="evidence" value="ECO:0000318"/>
    <property type="project" value="GO_Central"/>
</dbReference>
<dbReference type="GO" id="GO:0006364">
    <property type="term" value="P:rRNA processing"/>
    <property type="evidence" value="ECO:0000315"/>
    <property type="project" value="SGD"/>
</dbReference>
<dbReference type="FunFam" id="2.40.10.190:FF:000001">
    <property type="entry name" value="60S ribosomal protein L35a"/>
    <property type="match status" value="1"/>
</dbReference>
<dbReference type="Gene3D" id="2.40.10.190">
    <property type="entry name" value="translation elongation factor selb, chain A, domain 4"/>
    <property type="match status" value="1"/>
</dbReference>
<dbReference type="HAMAP" id="MF_00573">
    <property type="entry name" value="Ribosomal_eL33"/>
    <property type="match status" value="1"/>
</dbReference>
<dbReference type="InterPro" id="IPR001780">
    <property type="entry name" value="Ribosomal_eL33"/>
</dbReference>
<dbReference type="InterPro" id="IPR018266">
    <property type="entry name" value="Ribosomal_eL33_CS"/>
</dbReference>
<dbReference type="InterPro" id="IPR038661">
    <property type="entry name" value="Ribosomal_eL33_sf"/>
</dbReference>
<dbReference type="InterPro" id="IPR009000">
    <property type="entry name" value="Transl_B-barrel_sf"/>
</dbReference>
<dbReference type="PANTHER" id="PTHR10902">
    <property type="entry name" value="60S RIBOSOMAL PROTEIN L35A"/>
    <property type="match status" value="1"/>
</dbReference>
<dbReference type="Pfam" id="PF01247">
    <property type="entry name" value="Ribosomal_L35Ae"/>
    <property type="match status" value="1"/>
</dbReference>
<dbReference type="SUPFAM" id="SSF50447">
    <property type="entry name" value="Translation proteins"/>
    <property type="match status" value="1"/>
</dbReference>
<dbReference type="PROSITE" id="PS01105">
    <property type="entry name" value="RIBOSOMAL_L35AE"/>
    <property type="match status" value="1"/>
</dbReference>
<evidence type="ECO:0000269" key="1">
    <source>
    </source>
</evidence>
<evidence type="ECO:0000269" key="2">
    <source>
    </source>
</evidence>
<evidence type="ECO:0000269" key="3">
    <source>
    </source>
</evidence>
<evidence type="ECO:0000303" key="4">
    <source>
    </source>
</evidence>
<evidence type="ECO:0000303" key="5">
    <source>
    </source>
</evidence>
<evidence type="ECO:0000305" key="6"/>
<evidence type="ECO:0000305" key="7">
    <source>
    </source>
</evidence>
<evidence type="ECO:0000305" key="8">
    <source>
    </source>
</evidence>
<evidence type="ECO:0007744" key="9">
    <source>
    </source>
</evidence>
<evidence type="ECO:0007829" key="10">
    <source>
        <dbReference type="PDB" id="6EM3"/>
    </source>
</evidence>
<accession>P05744</accession>
<accession>D6W3M6</accession>
<name>RL33A_YEAST</name>